<organism>
    <name type="scientific">Escherichia coli (strain K12)</name>
    <dbReference type="NCBI Taxonomy" id="83333"/>
    <lineage>
        <taxon>Bacteria</taxon>
        <taxon>Pseudomonadati</taxon>
        <taxon>Pseudomonadota</taxon>
        <taxon>Gammaproteobacteria</taxon>
        <taxon>Enterobacterales</taxon>
        <taxon>Enterobacteriaceae</taxon>
        <taxon>Escherichia</taxon>
    </lineage>
</organism>
<proteinExistence type="evidence at transcript level"/>
<protein>
    <recommendedName>
        <fullName evidence="6">Probable cyclic di-GMP phosphodiesterase PdeB</fullName>
        <ecNumber evidence="1">3.1.4.52</ecNumber>
    </recommendedName>
</protein>
<gene>
    <name evidence="5" type="primary">pdeB</name>
    <name type="synonym">ylaB</name>
    <name type="ordered locus">b0457</name>
    <name type="ordered locus">JW5062</name>
</gene>
<feature type="chain" id="PRO_0000168633" description="Probable cyclic di-GMP phosphodiesterase PdeB">
    <location>
        <begin position="1"/>
        <end position="516"/>
    </location>
</feature>
<feature type="transmembrane region" description="Helical" evidence="2">
    <location>
        <begin position="6"/>
        <end position="26"/>
    </location>
</feature>
<feature type="transmembrane region" description="Helical" evidence="2">
    <location>
        <begin position="242"/>
        <end position="262"/>
    </location>
</feature>
<feature type="domain" description="EAL" evidence="3">
    <location>
        <begin position="268"/>
        <end position="516"/>
    </location>
</feature>
<dbReference type="EC" id="3.1.4.52" evidence="1"/>
<dbReference type="EMBL" id="U82664">
    <property type="protein sequence ID" value="AAB40212.1"/>
    <property type="status" value="ALT_INIT"/>
    <property type="molecule type" value="Genomic_DNA"/>
</dbReference>
<dbReference type="EMBL" id="U00096">
    <property type="protein sequence ID" value="AAC73559.2"/>
    <property type="molecule type" value="Genomic_DNA"/>
</dbReference>
<dbReference type="EMBL" id="AP009048">
    <property type="protein sequence ID" value="BAE76236.1"/>
    <property type="molecule type" value="Genomic_DNA"/>
</dbReference>
<dbReference type="PIR" id="H64775">
    <property type="entry name" value="H64775"/>
</dbReference>
<dbReference type="RefSeq" id="NP_414990.2">
    <property type="nucleotide sequence ID" value="NC_000913.3"/>
</dbReference>
<dbReference type="RefSeq" id="WP_001310610.1">
    <property type="nucleotide sequence ID" value="NZ_SSUW01000008.1"/>
</dbReference>
<dbReference type="SMR" id="P77473"/>
<dbReference type="BioGRID" id="4261748">
    <property type="interactions" value="17"/>
</dbReference>
<dbReference type="FunCoup" id="P77473">
    <property type="interactions" value="218"/>
</dbReference>
<dbReference type="STRING" id="511145.b0457"/>
<dbReference type="jPOST" id="P77473"/>
<dbReference type="PaxDb" id="511145-b0457"/>
<dbReference type="EnsemblBacteria" id="AAC73559">
    <property type="protein sequence ID" value="AAC73559"/>
    <property type="gene ID" value="b0457"/>
</dbReference>
<dbReference type="GeneID" id="948951"/>
<dbReference type="KEGG" id="ecj:JW5062"/>
<dbReference type="KEGG" id="eco:b0457"/>
<dbReference type="KEGG" id="ecoc:C3026_02240"/>
<dbReference type="PATRIC" id="fig|1411691.4.peg.1819"/>
<dbReference type="EchoBASE" id="EB3988"/>
<dbReference type="eggNOG" id="COG4943">
    <property type="taxonomic scope" value="Bacteria"/>
</dbReference>
<dbReference type="HOGENOM" id="CLU_000445_131_1_6"/>
<dbReference type="InParanoid" id="P77473"/>
<dbReference type="OMA" id="HIIRMAH"/>
<dbReference type="OrthoDB" id="9812358at2"/>
<dbReference type="PhylomeDB" id="P77473"/>
<dbReference type="BioCyc" id="EcoCyc:G6252-MONOMER"/>
<dbReference type="PRO" id="PR:P77473"/>
<dbReference type="Proteomes" id="UP000000625">
    <property type="component" value="Chromosome"/>
</dbReference>
<dbReference type="GO" id="GO:0005886">
    <property type="term" value="C:plasma membrane"/>
    <property type="evidence" value="ECO:0000314"/>
    <property type="project" value="EcoCyc"/>
</dbReference>
<dbReference type="GO" id="GO:0071111">
    <property type="term" value="F:cyclic-guanylate-specific phosphodiesterase activity"/>
    <property type="evidence" value="ECO:0000314"/>
    <property type="project" value="EcoCyc"/>
</dbReference>
<dbReference type="GO" id="GO:1900190">
    <property type="term" value="P:regulation of single-species biofilm formation"/>
    <property type="evidence" value="ECO:0000318"/>
    <property type="project" value="GO_Central"/>
</dbReference>
<dbReference type="CDD" id="cd01948">
    <property type="entry name" value="EAL"/>
    <property type="match status" value="1"/>
</dbReference>
<dbReference type="FunFam" id="3.20.20.450:FF:000009">
    <property type="entry name" value="Cyclic diguanylate phosphodiesterase"/>
    <property type="match status" value="1"/>
</dbReference>
<dbReference type="Gene3D" id="3.20.20.450">
    <property type="entry name" value="EAL domain"/>
    <property type="match status" value="1"/>
</dbReference>
<dbReference type="InterPro" id="IPR024744">
    <property type="entry name" value="CSS-motif_dom"/>
</dbReference>
<dbReference type="InterPro" id="IPR050706">
    <property type="entry name" value="Cyclic-di-GMP_PDE-like"/>
</dbReference>
<dbReference type="InterPro" id="IPR001633">
    <property type="entry name" value="EAL_dom"/>
</dbReference>
<dbReference type="InterPro" id="IPR035919">
    <property type="entry name" value="EAL_sf"/>
</dbReference>
<dbReference type="PANTHER" id="PTHR33121:SF81">
    <property type="entry name" value="CYCLIC DI-GMP PHOSPHODIESTERASE PDEB-RELATED"/>
    <property type="match status" value="1"/>
</dbReference>
<dbReference type="PANTHER" id="PTHR33121">
    <property type="entry name" value="CYCLIC DI-GMP PHOSPHODIESTERASE PDEF"/>
    <property type="match status" value="1"/>
</dbReference>
<dbReference type="Pfam" id="PF12792">
    <property type="entry name" value="CSS-motif"/>
    <property type="match status" value="1"/>
</dbReference>
<dbReference type="Pfam" id="PF00563">
    <property type="entry name" value="EAL"/>
    <property type="match status" value="1"/>
</dbReference>
<dbReference type="SMART" id="SM00052">
    <property type="entry name" value="EAL"/>
    <property type="match status" value="1"/>
</dbReference>
<dbReference type="SUPFAM" id="SSF141868">
    <property type="entry name" value="EAL domain-like"/>
    <property type="match status" value="1"/>
</dbReference>
<dbReference type="PROSITE" id="PS50883">
    <property type="entry name" value="EAL"/>
    <property type="match status" value="1"/>
</dbReference>
<evidence type="ECO:0000250" key="1">
    <source>
        <dbReference type="UniProtKB" id="P21514"/>
    </source>
</evidence>
<evidence type="ECO:0000255" key="2"/>
<evidence type="ECO:0000255" key="3">
    <source>
        <dbReference type="PROSITE-ProRule" id="PRU00074"/>
    </source>
</evidence>
<evidence type="ECO:0000269" key="4">
    <source>
    </source>
</evidence>
<evidence type="ECO:0000303" key="5">
    <source>
    </source>
</evidence>
<evidence type="ECO:0000305" key="6"/>
<reference key="1">
    <citation type="submission" date="1997-01" db="EMBL/GenBank/DDBJ databases">
        <title>Sequence of minutes 4-25 of Escherichia coli.</title>
        <authorList>
            <person name="Chung E."/>
            <person name="Allen E."/>
            <person name="Araujo R."/>
            <person name="Aparicio A.M."/>
            <person name="Davis K."/>
            <person name="Duncan M."/>
            <person name="Federspiel N."/>
            <person name="Hyman R."/>
            <person name="Kalman S."/>
            <person name="Komp C."/>
            <person name="Kurdi O."/>
            <person name="Lew H."/>
            <person name="Lin D."/>
            <person name="Namath A."/>
            <person name="Oefner P."/>
            <person name="Roberts D."/>
            <person name="Schramm S."/>
            <person name="Davis R.W."/>
        </authorList>
    </citation>
    <scope>NUCLEOTIDE SEQUENCE [LARGE SCALE GENOMIC DNA]</scope>
    <source>
        <strain>K12 / MG1655 / ATCC 47076</strain>
    </source>
</reference>
<reference key="2">
    <citation type="journal article" date="1997" name="Science">
        <title>The complete genome sequence of Escherichia coli K-12.</title>
        <authorList>
            <person name="Blattner F.R."/>
            <person name="Plunkett G. III"/>
            <person name="Bloch C.A."/>
            <person name="Perna N.T."/>
            <person name="Burland V."/>
            <person name="Riley M."/>
            <person name="Collado-Vides J."/>
            <person name="Glasner J.D."/>
            <person name="Rode C.K."/>
            <person name="Mayhew G.F."/>
            <person name="Gregor J."/>
            <person name="Davis N.W."/>
            <person name="Kirkpatrick H.A."/>
            <person name="Goeden M.A."/>
            <person name="Rose D.J."/>
            <person name="Mau B."/>
            <person name="Shao Y."/>
        </authorList>
    </citation>
    <scope>NUCLEOTIDE SEQUENCE [LARGE SCALE GENOMIC DNA]</scope>
    <source>
        <strain>K12 / MG1655 / ATCC 47076</strain>
    </source>
</reference>
<reference key="3">
    <citation type="journal article" date="2006" name="Mol. Syst. Biol.">
        <title>Highly accurate genome sequences of Escherichia coli K-12 strains MG1655 and W3110.</title>
        <authorList>
            <person name="Hayashi K."/>
            <person name="Morooka N."/>
            <person name="Yamamoto Y."/>
            <person name="Fujita K."/>
            <person name="Isono K."/>
            <person name="Choi S."/>
            <person name="Ohtsubo E."/>
            <person name="Baba T."/>
            <person name="Wanner B.L."/>
            <person name="Mori H."/>
            <person name="Horiuchi T."/>
        </authorList>
    </citation>
    <scope>NUCLEOTIDE SEQUENCE [LARGE SCALE GENOMIC DNA]</scope>
    <source>
        <strain>K12 / W3110 / ATCC 27325 / DSM 5911</strain>
    </source>
</reference>
<reference key="4">
    <citation type="journal article" date="2009" name="Microbiology">
        <title>Gene expression patterns and differential input into curli fimbriae regulation of all GGDEF/EAL domain proteins in Escherichia coli.</title>
        <authorList>
            <person name="Sommerfeldt N."/>
            <person name="Possling A."/>
            <person name="Becker G."/>
            <person name="Pesavento C."/>
            <person name="Tschowri N."/>
            <person name="Hengge R."/>
        </authorList>
    </citation>
    <scope>INDUCTION</scope>
    <scope>RPOS-DEPENDENCE</scope>
    <source>
        <strain>K12 / W3110 / ATCC 27325 / DSM 5911</strain>
    </source>
</reference>
<reference key="5">
    <citation type="journal article" date="2015" name="J. Bacteriol.">
        <title>Systematic nomenclature for GGDEF and EAL domain-containing cyclic di-GMP turnover proteins of Escherichia coli.</title>
        <authorList>
            <person name="Hengge R."/>
            <person name="Galperin M.Y."/>
            <person name="Ghigo J.M."/>
            <person name="Gomelsky M."/>
            <person name="Green J."/>
            <person name="Hughes K.T."/>
            <person name="Jenal U."/>
            <person name="Landini P."/>
        </authorList>
    </citation>
    <scope>NOMENCLATURE</scope>
</reference>
<accession>P77473</accession>
<accession>Q2MBX0</accession>
<comment type="function">
    <text evidence="1">Phosphodiesterase (PDE) that catalyzes the hydrolysis of cyclic-di-GMP (c-di-GMP) to 5'-pGpG.</text>
</comment>
<comment type="catalytic activity">
    <reaction evidence="1">
        <text>3',3'-c-di-GMP + H2O = 5'-phosphoguanylyl(3'-&gt;5')guanosine + H(+)</text>
        <dbReference type="Rhea" id="RHEA:24902"/>
        <dbReference type="ChEBI" id="CHEBI:15377"/>
        <dbReference type="ChEBI" id="CHEBI:15378"/>
        <dbReference type="ChEBI" id="CHEBI:58754"/>
        <dbReference type="ChEBI" id="CHEBI:58805"/>
        <dbReference type="EC" id="3.1.4.52"/>
    </reaction>
</comment>
<comment type="subcellular location">
    <subcellularLocation>
        <location evidence="6">Cell inner membrane</location>
        <topology evidence="2">Multi-pass membrane protein</topology>
    </subcellularLocation>
</comment>
<comment type="induction">
    <text evidence="4">Expressed during transition into stationary phase, at both 28 and 37 degrees Celsius. Expression is RpoS dependent.</text>
</comment>
<comment type="sequence caution" evidence="6">
    <conflict type="erroneous initiation">
        <sequence resource="EMBL-CDS" id="AAB40212"/>
    </conflict>
    <text>Extended N-terminus.</text>
</comment>
<name>PDEB_ECOLI</name>
<sequence length="516" mass="58720">MRTRHLVGLISGVLILSVLLPVGLSIWLAHQQVETSFIEELDTYSSRVAIRANKVATQGKDALQELERWQGAACSEAHLMEMRRVSYSYRYIQEVAYIDNNVPQCSSLEHESPPDTFPEPGKISKDGYRVWLTSHNDLGIIRYMVAMGTAHYVVMIDPASFIDVIPYSSWQIDAAIIGNAHNVVITSSDEIAQGIITRLQKTPGEHIENNGIIYDILPLPEMNISIITWASTKMLQKGWHRQVFIWLPLGLVIGLLAAMFVLRILRRIQSPHHRLQDAIENRDICVHYQPIVSLANGKIVGAEALARWPQTDGSWLSPDSFIPLAQQTGLSEPLTLLIIRSVFEDMGDWLRQHPQQHISINLESPVLTSEKIPQLLRDMINHYQVNPRQIALELTEREFADPKTSAPIISRYREAGHEIYLDDFGTGYSSLSYLQDLDVDILKIDKSFVDALEYKNVTPHIIEMAKTLKLKMVAEGIETSKQEEWLRQHGVHYGQGWLYSKALPKEDFLRWAEQHL</sequence>
<keyword id="KW-0973">c-di-GMP</keyword>
<keyword id="KW-0997">Cell inner membrane</keyword>
<keyword id="KW-1003">Cell membrane</keyword>
<keyword id="KW-0378">Hydrolase</keyword>
<keyword id="KW-0472">Membrane</keyword>
<keyword id="KW-1185">Reference proteome</keyword>
<keyword id="KW-0812">Transmembrane</keyword>
<keyword id="KW-1133">Transmembrane helix</keyword>